<sequence length="477" mass="52223">MGFWGLEVKPGKPQAYNPKNEQGKIHVTQATLGTGLSKEKSVIQCSIGDKAPIALCSLLPNKIECCPLNLEFDDDDEPVEFTVTGDRSIHLSGFLEYYQDDEDDYEHDEDDSDGIDVGESEEDDSCEYDSEEDEQLDEFEDFLDSNLERYRNAAAPKSGVIIEEIEDEEKPAKDNKAKQTKKKSQASEGENAKKQIVAIEGAHVPVLESEDEDEDGLPIPKGKSSEVENASGEKMVVDNDEQGSNKKRKAKAAEQDDGQESANKSKKKKNQKEKKKGENVLNEEAGQVQTGNVLKKQDISQISSNTKAQDGTANNAMSESSKTPDKSAEKKTKNKKKKKPSDEAAEISGTVEKQTPADSKSSQVRTYPNGLIVEELSMGKPNGKRADPGKTVSVRYIGKLQKNGKIFDSNIGKSPFKFRLGIGSVIKGWDVGVNGMRVGDKRKLTIPPSMGYGVKGAGGQIPPNSWLTFDVELINVQ</sequence>
<accession>Q93ZG9</accession>
<accession>Q9STK2</accession>
<protein>
    <recommendedName>
        <fullName>Peptidyl-prolyl cis-trans isomerase FKBP53</fullName>
        <shortName>PPIase FKBP53</shortName>
        <ecNumber>5.2.1.8</ecNumber>
    </recommendedName>
    <alternativeName>
        <fullName>FK506-binding protein 53</fullName>
        <shortName>AtFKBP53</shortName>
    </alternativeName>
    <alternativeName>
        <fullName>Immunophilin FKBP53</fullName>
    </alternativeName>
    <alternativeName>
        <fullName>Rotamase</fullName>
    </alternativeName>
</protein>
<dbReference type="EC" id="5.2.1.8"/>
<dbReference type="EMBL" id="AL079350">
    <property type="protein sequence ID" value="CAB45512.1"/>
    <property type="status" value="ALT_SEQ"/>
    <property type="molecule type" value="Genomic_DNA"/>
</dbReference>
<dbReference type="EMBL" id="AL161563">
    <property type="protein sequence ID" value="CAB81345.1"/>
    <property type="status" value="ALT_SEQ"/>
    <property type="molecule type" value="Genomic_DNA"/>
</dbReference>
<dbReference type="EMBL" id="CP002687">
    <property type="protein sequence ID" value="AEE85043.1"/>
    <property type="molecule type" value="Genomic_DNA"/>
</dbReference>
<dbReference type="EMBL" id="AY057543">
    <property type="protein sequence ID" value="AAL09783.1"/>
    <property type="molecule type" value="mRNA"/>
</dbReference>
<dbReference type="EMBL" id="AY143978">
    <property type="protein sequence ID" value="AAN28917.1"/>
    <property type="molecule type" value="mRNA"/>
</dbReference>
<dbReference type="PIR" id="T10215">
    <property type="entry name" value="T10215"/>
</dbReference>
<dbReference type="RefSeq" id="NP_567717.1">
    <molecule id="Q93ZG9-1"/>
    <property type="nucleotide sequence ID" value="NM_118666.3"/>
</dbReference>
<dbReference type="PDB" id="6J2M">
    <property type="method" value="X-ray"/>
    <property type="resolution" value="1.13 A"/>
    <property type="chains" value="A=360-477"/>
</dbReference>
<dbReference type="PDB" id="6J2Z">
    <property type="method" value="X-ray"/>
    <property type="resolution" value="2.40 A"/>
    <property type="chains" value="A/B/C/D/E/F/G/H/I/J=1-100"/>
</dbReference>
<dbReference type="PDB" id="7F2J">
    <property type="method" value="X-ray"/>
    <property type="resolution" value="1.60 A"/>
    <property type="chains" value="A/B=362-477"/>
</dbReference>
<dbReference type="PDBsum" id="6J2M"/>
<dbReference type="PDBsum" id="6J2Z"/>
<dbReference type="PDBsum" id="7F2J"/>
<dbReference type="SMR" id="Q93ZG9"/>
<dbReference type="BioGRID" id="13924">
    <property type="interactions" value="10"/>
</dbReference>
<dbReference type="FunCoup" id="Q93ZG9">
    <property type="interactions" value="356"/>
</dbReference>
<dbReference type="IntAct" id="Q93ZG9">
    <property type="interactions" value="1"/>
</dbReference>
<dbReference type="STRING" id="3702.Q93ZG9"/>
<dbReference type="iPTMnet" id="Q93ZG9"/>
<dbReference type="SwissPalm" id="Q93ZG9"/>
<dbReference type="PaxDb" id="3702-AT4G25340.1"/>
<dbReference type="ProteomicsDB" id="230427">
    <molecule id="Q93ZG9-1"/>
</dbReference>
<dbReference type="EnsemblPlants" id="AT4G25340.1">
    <molecule id="Q93ZG9-1"/>
    <property type="protein sequence ID" value="AT4G25340.1"/>
    <property type="gene ID" value="AT4G25340"/>
</dbReference>
<dbReference type="GeneID" id="828637"/>
<dbReference type="Gramene" id="AT4G25340.1">
    <molecule id="Q93ZG9-1"/>
    <property type="protein sequence ID" value="AT4G25340.1"/>
    <property type="gene ID" value="AT4G25340"/>
</dbReference>
<dbReference type="KEGG" id="ath:AT4G25340"/>
<dbReference type="Araport" id="AT4G25340"/>
<dbReference type="TAIR" id="AT4G25340">
    <property type="gene designation" value="FKBP53"/>
</dbReference>
<dbReference type="eggNOG" id="KOG0552">
    <property type="taxonomic scope" value="Eukaryota"/>
</dbReference>
<dbReference type="HOGENOM" id="CLU_022297_1_1_1"/>
<dbReference type="InParanoid" id="Q93ZG9"/>
<dbReference type="PhylomeDB" id="Q93ZG9"/>
<dbReference type="CD-CODE" id="4299E36E">
    <property type="entry name" value="Nucleolus"/>
</dbReference>
<dbReference type="PRO" id="PR:Q93ZG9"/>
<dbReference type="Proteomes" id="UP000006548">
    <property type="component" value="Chromosome 4"/>
</dbReference>
<dbReference type="ExpressionAtlas" id="Q93ZG9">
    <property type="expression patterns" value="baseline and differential"/>
</dbReference>
<dbReference type="GO" id="GO:0005730">
    <property type="term" value="C:nucleolus"/>
    <property type="evidence" value="ECO:0007005"/>
    <property type="project" value="TAIR"/>
</dbReference>
<dbReference type="GO" id="GO:0005634">
    <property type="term" value="C:nucleus"/>
    <property type="evidence" value="ECO:0000314"/>
    <property type="project" value="TAIR"/>
</dbReference>
<dbReference type="GO" id="GO:0042393">
    <property type="term" value="F:histone binding"/>
    <property type="evidence" value="ECO:0000314"/>
    <property type="project" value="TAIR"/>
</dbReference>
<dbReference type="GO" id="GO:0003755">
    <property type="term" value="F:peptidyl-prolyl cis-trans isomerase activity"/>
    <property type="evidence" value="ECO:0000314"/>
    <property type="project" value="TAIR"/>
</dbReference>
<dbReference type="GO" id="GO:0006334">
    <property type="term" value="P:nucleosome assembly"/>
    <property type="evidence" value="ECO:0000314"/>
    <property type="project" value="TAIR"/>
</dbReference>
<dbReference type="FunFam" id="3.10.50.40:FF:000006">
    <property type="entry name" value="Peptidyl-prolyl cis-trans isomerase"/>
    <property type="match status" value="1"/>
</dbReference>
<dbReference type="Gene3D" id="3.10.50.40">
    <property type="match status" value="1"/>
</dbReference>
<dbReference type="Gene3D" id="2.60.120.340">
    <property type="entry name" value="Nucleoplasmin core domain"/>
    <property type="match status" value="1"/>
</dbReference>
<dbReference type="InterPro" id="IPR041232">
    <property type="entry name" value="NPL"/>
</dbReference>
<dbReference type="InterPro" id="IPR046357">
    <property type="entry name" value="PPIase_dom_sf"/>
</dbReference>
<dbReference type="InterPro" id="IPR001179">
    <property type="entry name" value="PPIase_FKBP_dom"/>
</dbReference>
<dbReference type="InterPro" id="IPR023566">
    <property type="entry name" value="PPIase_Fpr3/Fpr4-like"/>
</dbReference>
<dbReference type="PANTHER" id="PTHR43811:SF19">
    <property type="entry name" value="39 KDA FK506-BINDING NUCLEAR PROTEIN"/>
    <property type="match status" value="1"/>
</dbReference>
<dbReference type="PANTHER" id="PTHR43811">
    <property type="entry name" value="FKBP-TYPE PEPTIDYL-PROLYL CIS-TRANS ISOMERASE FKPA"/>
    <property type="match status" value="1"/>
</dbReference>
<dbReference type="Pfam" id="PF00254">
    <property type="entry name" value="FKBP_C"/>
    <property type="match status" value="1"/>
</dbReference>
<dbReference type="Pfam" id="PF17800">
    <property type="entry name" value="NPL"/>
    <property type="match status" value="1"/>
</dbReference>
<dbReference type="PIRSF" id="PIRSF001473">
    <property type="entry name" value="FK506-bp_FPR3"/>
    <property type="match status" value="1"/>
</dbReference>
<dbReference type="SUPFAM" id="SSF54534">
    <property type="entry name" value="FKBP-like"/>
    <property type="match status" value="1"/>
</dbReference>
<dbReference type="PROSITE" id="PS50059">
    <property type="entry name" value="FKBP_PPIASE"/>
    <property type="match status" value="1"/>
</dbReference>
<organism>
    <name type="scientific">Arabidopsis thaliana</name>
    <name type="common">Mouse-ear cress</name>
    <dbReference type="NCBI Taxonomy" id="3702"/>
    <lineage>
        <taxon>Eukaryota</taxon>
        <taxon>Viridiplantae</taxon>
        <taxon>Streptophyta</taxon>
        <taxon>Embryophyta</taxon>
        <taxon>Tracheophyta</taxon>
        <taxon>Spermatophyta</taxon>
        <taxon>Magnoliopsida</taxon>
        <taxon>eudicotyledons</taxon>
        <taxon>Gunneridae</taxon>
        <taxon>Pentapetalae</taxon>
        <taxon>rosids</taxon>
        <taxon>malvids</taxon>
        <taxon>Brassicales</taxon>
        <taxon>Brassicaceae</taxon>
        <taxon>Camelineae</taxon>
        <taxon>Arabidopsis</taxon>
    </lineage>
</organism>
<reference key="1">
    <citation type="journal article" date="1999" name="Nature">
        <title>Sequence and analysis of chromosome 4 of the plant Arabidopsis thaliana.</title>
        <authorList>
            <person name="Mayer K.F.X."/>
            <person name="Schueller C."/>
            <person name="Wambutt R."/>
            <person name="Murphy G."/>
            <person name="Volckaert G."/>
            <person name="Pohl T."/>
            <person name="Duesterhoeft A."/>
            <person name="Stiekema W."/>
            <person name="Entian K.-D."/>
            <person name="Terryn N."/>
            <person name="Harris B."/>
            <person name="Ansorge W."/>
            <person name="Brandt P."/>
            <person name="Grivell L.A."/>
            <person name="Rieger M."/>
            <person name="Weichselgartner M."/>
            <person name="de Simone V."/>
            <person name="Obermaier B."/>
            <person name="Mache R."/>
            <person name="Mueller M."/>
            <person name="Kreis M."/>
            <person name="Delseny M."/>
            <person name="Puigdomenech P."/>
            <person name="Watson M."/>
            <person name="Schmidtheini T."/>
            <person name="Reichert B."/>
            <person name="Portetelle D."/>
            <person name="Perez-Alonso M."/>
            <person name="Boutry M."/>
            <person name="Bancroft I."/>
            <person name="Vos P."/>
            <person name="Hoheisel J."/>
            <person name="Zimmermann W."/>
            <person name="Wedler H."/>
            <person name="Ridley P."/>
            <person name="Langham S.-A."/>
            <person name="McCullagh B."/>
            <person name="Bilham L."/>
            <person name="Robben J."/>
            <person name="van der Schueren J."/>
            <person name="Grymonprez B."/>
            <person name="Chuang Y.-J."/>
            <person name="Vandenbussche F."/>
            <person name="Braeken M."/>
            <person name="Weltjens I."/>
            <person name="Voet M."/>
            <person name="Bastiaens I."/>
            <person name="Aert R."/>
            <person name="Defoor E."/>
            <person name="Weitzenegger T."/>
            <person name="Bothe G."/>
            <person name="Ramsperger U."/>
            <person name="Hilbert H."/>
            <person name="Braun M."/>
            <person name="Holzer E."/>
            <person name="Brandt A."/>
            <person name="Peters S."/>
            <person name="van Staveren M."/>
            <person name="Dirkse W."/>
            <person name="Mooijman P."/>
            <person name="Klein Lankhorst R."/>
            <person name="Rose M."/>
            <person name="Hauf J."/>
            <person name="Koetter P."/>
            <person name="Berneiser S."/>
            <person name="Hempel S."/>
            <person name="Feldpausch M."/>
            <person name="Lamberth S."/>
            <person name="Van den Daele H."/>
            <person name="De Keyser A."/>
            <person name="Buysshaert C."/>
            <person name="Gielen J."/>
            <person name="Villarroel R."/>
            <person name="De Clercq R."/>
            <person name="van Montagu M."/>
            <person name="Rogers J."/>
            <person name="Cronin A."/>
            <person name="Quail M.A."/>
            <person name="Bray-Allen S."/>
            <person name="Clark L."/>
            <person name="Doggett J."/>
            <person name="Hall S."/>
            <person name="Kay M."/>
            <person name="Lennard N."/>
            <person name="McLay K."/>
            <person name="Mayes R."/>
            <person name="Pettett A."/>
            <person name="Rajandream M.A."/>
            <person name="Lyne M."/>
            <person name="Benes V."/>
            <person name="Rechmann S."/>
            <person name="Borkova D."/>
            <person name="Bloecker H."/>
            <person name="Scharfe M."/>
            <person name="Grimm M."/>
            <person name="Loehnert T.-H."/>
            <person name="Dose S."/>
            <person name="de Haan M."/>
            <person name="Maarse A.C."/>
            <person name="Schaefer M."/>
            <person name="Mueller-Auer S."/>
            <person name="Gabel C."/>
            <person name="Fuchs M."/>
            <person name="Fartmann B."/>
            <person name="Granderath K."/>
            <person name="Dauner D."/>
            <person name="Herzl A."/>
            <person name="Neumann S."/>
            <person name="Argiriou A."/>
            <person name="Vitale D."/>
            <person name="Liguori R."/>
            <person name="Piravandi E."/>
            <person name="Massenet O."/>
            <person name="Quigley F."/>
            <person name="Clabauld G."/>
            <person name="Muendlein A."/>
            <person name="Felber R."/>
            <person name="Schnabl S."/>
            <person name="Hiller R."/>
            <person name="Schmidt W."/>
            <person name="Lecharny A."/>
            <person name="Aubourg S."/>
            <person name="Chefdor F."/>
            <person name="Cooke R."/>
            <person name="Berger C."/>
            <person name="Monfort A."/>
            <person name="Casacuberta E."/>
            <person name="Gibbons T."/>
            <person name="Weber N."/>
            <person name="Vandenbol M."/>
            <person name="Bargues M."/>
            <person name="Terol J."/>
            <person name="Torres A."/>
            <person name="Perez-Perez A."/>
            <person name="Purnelle B."/>
            <person name="Bent E."/>
            <person name="Johnson S."/>
            <person name="Tacon D."/>
            <person name="Jesse T."/>
            <person name="Heijnen L."/>
            <person name="Schwarz S."/>
            <person name="Scholler P."/>
            <person name="Heber S."/>
            <person name="Francs P."/>
            <person name="Bielke C."/>
            <person name="Frishman D."/>
            <person name="Haase D."/>
            <person name="Lemcke K."/>
            <person name="Mewes H.-W."/>
            <person name="Stocker S."/>
            <person name="Zaccaria P."/>
            <person name="Bevan M."/>
            <person name="Wilson R.K."/>
            <person name="de la Bastide M."/>
            <person name="Habermann K."/>
            <person name="Parnell L."/>
            <person name="Dedhia N."/>
            <person name="Gnoj L."/>
            <person name="Schutz K."/>
            <person name="Huang E."/>
            <person name="Spiegel L."/>
            <person name="Sekhon M."/>
            <person name="Murray J."/>
            <person name="Sheet P."/>
            <person name="Cordes M."/>
            <person name="Abu-Threideh J."/>
            <person name="Stoneking T."/>
            <person name="Kalicki J."/>
            <person name="Graves T."/>
            <person name="Harmon G."/>
            <person name="Edwards J."/>
            <person name="Latreille P."/>
            <person name="Courtney L."/>
            <person name="Cloud J."/>
            <person name="Abbott A."/>
            <person name="Scott K."/>
            <person name="Johnson D."/>
            <person name="Minx P."/>
            <person name="Bentley D."/>
            <person name="Fulton B."/>
            <person name="Miller N."/>
            <person name="Greco T."/>
            <person name="Kemp K."/>
            <person name="Kramer J."/>
            <person name="Fulton L."/>
            <person name="Mardis E."/>
            <person name="Dante M."/>
            <person name="Pepin K."/>
            <person name="Hillier L.W."/>
            <person name="Nelson J."/>
            <person name="Spieth J."/>
            <person name="Ryan E."/>
            <person name="Andrews S."/>
            <person name="Geisel C."/>
            <person name="Layman D."/>
            <person name="Du H."/>
            <person name="Ali J."/>
            <person name="Berghoff A."/>
            <person name="Jones K."/>
            <person name="Drone K."/>
            <person name="Cotton M."/>
            <person name="Joshu C."/>
            <person name="Antonoiu B."/>
            <person name="Zidanic M."/>
            <person name="Strong C."/>
            <person name="Sun H."/>
            <person name="Lamar B."/>
            <person name="Yordan C."/>
            <person name="Ma P."/>
            <person name="Zhong J."/>
            <person name="Preston R."/>
            <person name="Vil D."/>
            <person name="Shekher M."/>
            <person name="Matero A."/>
            <person name="Shah R."/>
            <person name="Swaby I.K."/>
            <person name="O'Shaughnessy A."/>
            <person name="Rodriguez M."/>
            <person name="Hoffman J."/>
            <person name="Till S."/>
            <person name="Granat S."/>
            <person name="Shohdy N."/>
            <person name="Hasegawa A."/>
            <person name="Hameed A."/>
            <person name="Lodhi M."/>
            <person name="Johnson A."/>
            <person name="Chen E."/>
            <person name="Marra M.A."/>
            <person name="Martienssen R."/>
            <person name="McCombie W.R."/>
        </authorList>
    </citation>
    <scope>NUCLEOTIDE SEQUENCE [LARGE SCALE GENOMIC DNA]</scope>
    <source>
        <strain>cv. Columbia</strain>
    </source>
</reference>
<reference key="2">
    <citation type="journal article" date="2017" name="Plant J.">
        <title>Araport11: a complete reannotation of the Arabidopsis thaliana reference genome.</title>
        <authorList>
            <person name="Cheng C.Y."/>
            <person name="Krishnakumar V."/>
            <person name="Chan A.P."/>
            <person name="Thibaud-Nissen F."/>
            <person name="Schobel S."/>
            <person name="Town C.D."/>
        </authorList>
    </citation>
    <scope>GENOME REANNOTATION</scope>
    <source>
        <strain>cv. Columbia</strain>
    </source>
</reference>
<reference key="3">
    <citation type="journal article" date="2003" name="Science">
        <title>Empirical analysis of transcriptional activity in the Arabidopsis genome.</title>
        <authorList>
            <person name="Yamada K."/>
            <person name="Lim J."/>
            <person name="Dale J.M."/>
            <person name="Chen H."/>
            <person name="Shinn P."/>
            <person name="Palm C.J."/>
            <person name="Southwick A.M."/>
            <person name="Wu H.C."/>
            <person name="Kim C.J."/>
            <person name="Nguyen M."/>
            <person name="Pham P.K."/>
            <person name="Cheuk R.F."/>
            <person name="Karlin-Newmann G."/>
            <person name="Liu S.X."/>
            <person name="Lam B."/>
            <person name="Sakano H."/>
            <person name="Wu T."/>
            <person name="Yu G."/>
            <person name="Miranda M."/>
            <person name="Quach H.L."/>
            <person name="Tripp M."/>
            <person name="Chang C.H."/>
            <person name="Lee J.M."/>
            <person name="Toriumi M.J."/>
            <person name="Chan M.M."/>
            <person name="Tang C.C."/>
            <person name="Onodera C.S."/>
            <person name="Deng J.M."/>
            <person name="Akiyama K."/>
            <person name="Ansari Y."/>
            <person name="Arakawa T."/>
            <person name="Banh J."/>
            <person name="Banno F."/>
            <person name="Bowser L."/>
            <person name="Brooks S.Y."/>
            <person name="Carninci P."/>
            <person name="Chao Q."/>
            <person name="Choy N."/>
            <person name="Enju A."/>
            <person name="Goldsmith A.D."/>
            <person name="Gurjal M."/>
            <person name="Hansen N.F."/>
            <person name="Hayashizaki Y."/>
            <person name="Johnson-Hopson C."/>
            <person name="Hsuan V.W."/>
            <person name="Iida K."/>
            <person name="Karnes M."/>
            <person name="Khan S."/>
            <person name="Koesema E."/>
            <person name="Ishida J."/>
            <person name="Jiang P.X."/>
            <person name="Jones T."/>
            <person name="Kawai J."/>
            <person name="Kamiya A."/>
            <person name="Meyers C."/>
            <person name="Nakajima M."/>
            <person name="Narusaka M."/>
            <person name="Seki M."/>
            <person name="Sakurai T."/>
            <person name="Satou M."/>
            <person name="Tamse R."/>
            <person name="Vaysberg M."/>
            <person name="Wallender E.K."/>
            <person name="Wong C."/>
            <person name="Yamamura Y."/>
            <person name="Yuan S."/>
            <person name="Shinozaki K."/>
            <person name="Davis R.W."/>
            <person name="Theologis A."/>
            <person name="Ecker J.R."/>
        </authorList>
    </citation>
    <scope>NUCLEOTIDE SEQUENCE [LARGE SCALE MRNA]</scope>
    <source>
        <strain>cv. Columbia</strain>
    </source>
</reference>
<reference key="4">
    <citation type="journal article" date="2004" name="Plant Physiol.">
        <title>Immunophilins and parvulins. Superfamily of peptidyl prolyl isomerases in Arabidopsis.</title>
        <authorList>
            <person name="He Z."/>
            <person name="Li L."/>
            <person name="Luan S."/>
        </authorList>
    </citation>
    <scope>GENE FAMILY</scope>
    <scope>NOMENCLATURE</scope>
</reference>
<reference key="5">
    <citation type="journal article" date="2007" name="Mol. Cell. Proteomics">
        <title>Multidimensional protein identification technology (MudPIT) analysis of ubiquitinated proteins in plants.</title>
        <authorList>
            <person name="Maor R."/>
            <person name="Jones A."/>
            <person name="Nuehse T.S."/>
            <person name="Studholme D.J."/>
            <person name="Peck S.C."/>
            <person name="Shirasu K."/>
        </authorList>
    </citation>
    <scope>IDENTIFICATION BY MASS SPECTROMETRY [LARGE SCALE ANALYSIS]</scope>
    <source>
        <strain>cv. Landsberg erecta</strain>
    </source>
</reference>
<reference key="6">
    <citation type="journal article" date="2010" name="Cell Res.">
        <title>AtFKBP53 is a histone chaperone required for repression of ribosomal RNA gene expression in Arabidopsis.</title>
        <authorList>
            <person name="Li H."/>
            <person name="Luan S."/>
        </authorList>
    </citation>
    <scope>FUNCTION</scope>
    <scope>SUBCELLULAR LOCATION</scope>
    <scope>TISSUE SPECIFICITY</scope>
    <scope>INTERACTION WITH H3</scope>
</reference>
<evidence type="ECO:0000250" key="1"/>
<evidence type="ECO:0000255" key="2">
    <source>
        <dbReference type="PROSITE-ProRule" id="PRU00277"/>
    </source>
</evidence>
<evidence type="ECO:0000256" key="3">
    <source>
        <dbReference type="SAM" id="MobiDB-lite"/>
    </source>
</evidence>
<evidence type="ECO:0000269" key="4">
    <source>
    </source>
</evidence>
<evidence type="ECO:0000305" key="5"/>
<evidence type="ECO:0007829" key="6">
    <source>
        <dbReference type="PDB" id="6J2M"/>
    </source>
</evidence>
<evidence type="ECO:0007829" key="7">
    <source>
        <dbReference type="PDB" id="6J2Z"/>
    </source>
</evidence>
<evidence type="ECO:0007829" key="8">
    <source>
        <dbReference type="PDB" id="7F2J"/>
    </source>
</evidence>
<name>FKB53_ARATH</name>
<comment type="function">
    <text evidence="1 4">PPIases accelerate the folding of proteins. It catalyzes the cis-trans isomerization of proline imidic peptide bonds in oligopeptides (By similarity). Histone chaperone possibly involved in H3/H4 deposition to the nucleosome. Associates with 18S rDNA chromatin and negatively regulates the level of its expression.</text>
</comment>
<comment type="catalytic activity">
    <reaction>
        <text>[protein]-peptidylproline (omega=180) = [protein]-peptidylproline (omega=0)</text>
        <dbReference type="Rhea" id="RHEA:16237"/>
        <dbReference type="Rhea" id="RHEA-COMP:10747"/>
        <dbReference type="Rhea" id="RHEA-COMP:10748"/>
        <dbReference type="ChEBI" id="CHEBI:83833"/>
        <dbReference type="ChEBI" id="CHEBI:83834"/>
        <dbReference type="EC" id="5.2.1.8"/>
    </reaction>
</comment>
<comment type="subunit">
    <text evidence="4">Interacts with histone H3.</text>
</comment>
<comment type="subcellular location">
    <subcellularLocation>
        <location evidence="4">Nucleus</location>
    </subcellularLocation>
</comment>
<comment type="alternative products">
    <event type="alternative splicing"/>
    <isoform>
        <id>Q93ZG9-1</id>
        <name>1</name>
        <sequence type="displayed"/>
    </isoform>
    <text>A number of isoforms are produced. According to EST sequences.</text>
</comment>
<comment type="tissue specificity">
    <text evidence="4">Broadly expressed in leaves, flowers, stems and roots. Detected in root apical meristem region and pollen.</text>
</comment>
<comment type="similarity">
    <text evidence="5">Belongs to the FKBP-type PPIase family.</text>
</comment>
<comment type="sequence caution" evidence="5">
    <conflict type="erroneous gene model prediction">
        <sequence resource="EMBL-CDS" id="CAB45512"/>
    </conflict>
</comment>
<comment type="sequence caution" evidence="5">
    <conflict type="erroneous gene model prediction">
        <sequence resource="EMBL-CDS" id="CAB81345"/>
    </conflict>
</comment>
<keyword id="KW-0002">3D-structure</keyword>
<keyword id="KW-0025">Alternative splicing</keyword>
<keyword id="KW-0143">Chaperone</keyword>
<keyword id="KW-0413">Isomerase</keyword>
<keyword id="KW-0539">Nucleus</keyword>
<keyword id="KW-1185">Reference proteome</keyword>
<keyword id="KW-0697">Rotamase</keyword>
<gene>
    <name type="primary">FKBP53</name>
    <name type="ordered locus">At4g25340</name>
    <name type="ORF">T30C3_20</name>
</gene>
<feature type="chain" id="PRO_0000416136" description="Peptidyl-prolyl cis-trans isomerase FKBP53">
    <location>
        <begin position="1"/>
        <end position="477"/>
    </location>
</feature>
<feature type="domain" description="PPIase FKBP-type" evidence="2">
    <location>
        <begin position="389"/>
        <end position="477"/>
    </location>
</feature>
<feature type="region of interest" description="Disordered" evidence="3">
    <location>
        <begin position="104"/>
        <end position="135"/>
    </location>
</feature>
<feature type="region of interest" description="Disordered" evidence="3">
    <location>
        <begin position="153"/>
        <end position="366"/>
    </location>
</feature>
<feature type="compositionally biased region" description="Basic residues" evidence="3">
    <location>
        <begin position="264"/>
        <end position="274"/>
    </location>
</feature>
<feature type="compositionally biased region" description="Polar residues" evidence="3">
    <location>
        <begin position="299"/>
        <end position="321"/>
    </location>
</feature>
<feature type="compositionally biased region" description="Basic and acidic residues" evidence="3">
    <location>
        <begin position="322"/>
        <end position="331"/>
    </location>
</feature>
<feature type="compositionally biased region" description="Polar residues" evidence="3">
    <location>
        <begin position="351"/>
        <end position="366"/>
    </location>
</feature>
<feature type="strand" evidence="7">
    <location>
        <begin position="3"/>
        <end position="8"/>
    </location>
</feature>
<feature type="strand" evidence="7">
    <location>
        <begin position="10"/>
        <end position="12"/>
    </location>
</feature>
<feature type="strand" evidence="7">
    <location>
        <begin position="21"/>
        <end position="23"/>
    </location>
</feature>
<feature type="strand" evidence="7">
    <location>
        <begin position="25"/>
        <end position="32"/>
    </location>
</feature>
<feature type="strand" evidence="7">
    <location>
        <begin position="41"/>
        <end position="45"/>
    </location>
</feature>
<feature type="strand" evidence="7">
    <location>
        <begin position="53"/>
        <end position="59"/>
    </location>
</feature>
<feature type="turn" evidence="7">
    <location>
        <begin position="60"/>
        <end position="62"/>
    </location>
</feature>
<feature type="strand" evidence="7">
    <location>
        <begin position="65"/>
        <end position="70"/>
    </location>
</feature>
<feature type="strand" evidence="7">
    <location>
        <begin position="81"/>
        <end position="83"/>
    </location>
</feature>
<feature type="strand" evidence="7">
    <location>
        <begin position="85"/>
        <end position="87"/>
    </location>
</feature>
<feature type="strand" evidence="7">
    <location>
        <begin position="89"/>
        <end position="95"/>
    </location>
</feature>
<feature type="strand" evidence="8">
    <location>
        <begin position="364"/>
        <end position="366"/>
    </location>
</feature>
<feature type="strand" evidence="6">
    <location>
        <begin position="372"/>
        <end position="377"/>
    </location>
</feature>
<feature type="strand" evidence="6">
    <location>
        <begin position="390"/>
        <end position="400"/>
    </location>
</feature>
<feature type="turn" evidence="6">
    <location>
        <begin position="401"/>
        <end position="403"/>
    </location>
</feature>
<feature type="strand" evidence="6">
    <location>
        <begin position="406"/>
        <end position="409"/>
    </location>
</feature>
<feature type="strand" evidence="6">
    <location>
        <begin position="416"/>
        <end position="419"/>
    </location>
</feature>
<feature type="strand" evidence="6">
    <location>
        <begin position="422"/>
        <end position="425"/>
    </location>
</feature>
<feature type="helix" evidence="6">
    <location>
        <begin position="427"/>
        <end position="433"/>
    </location>
</feature>
<feature type="strand" evidence="6">
    <location>
        <begin position="441"/>
        <end position="446"/>
    </location>
</feature>
<feature type="helix" evidence="6">
    <location>
        <begin position="448"/>
        <end position="450"/>
    </location>
</feature>
<feature type="turn" evidence="6">
    <location>
        <begin position="451"/>
        <end position="455"/>
    </location>
</feature>
<feature type="turn" evidence="6">
    <location>
        <begin position="458"/>
        <end position="460"/>
    </location>
</feature>
<feature type="strand" evidence="6">
    <location>
        <begin position="467"/>
        <end position="477"/>
    </location>
</feature>
<proteinExistence type="evidence at protein level"/>